<proteinExistence type="inferred from homology"/>
<evidence type="ECO:0000255" key="1">
    <source>
        <dbReference type="HAMAP-Rule" id="MF_01356"/>
    </source>
</evidence>
<dbReference type="EC" id="7.1.1.-" evidence="1"/>
<dbReference type="EMBL" id="CP000786">
    <property type="protein sequence ID" value="ABZ97407.1"/>
    <property type="molecule type" value="Genomic_DNA"/>
</dbReference>
<dbReference type="RefSeq" id="WP_012388288.1">
    <property type="nucleotide sequence ID" value="NC_010602.1"/>
</dbReference>
<dbReference type="SMR" id="B0SP83"/>
<dbReference type="STRING" id="456481.LEPBI_I1297"/>
<dbReference type="KEGG" id="lbi:LEPBI_I1297"/>
<dbReference type="HOGENOM" id="CLU_055737_7_3_12"/>
<dbReference type="OrthoDB" id="9786737at2"/>
<dbReference type="BioCyc" id="LBIF456481:LEPBI_RS06350-MONOMER"/>
<dbReference type="Proteomes" id="UP000001847">
    <property type="component" value="Chromosome I"/>
</dbReference>
<dbReference type="GO" id="GO:0005886">
    <property type="term" value="C:plasma membrane"/>
    <property type="evidence" value="ECO:0007669"/>
    <property type="project" value="UniProtKB-SubCell"/>
</dbReference>
<dbReference type="GO" id="GO:0045271">
    <property type="term" value="C:respiratory chain complex I"/>
    <property type="evidence" value="ECO:0007669"/>
    <property type="project" value="TreeGrafter"/>
</dbReference>
<dbReference type="GO" id="GO:0051539">
    <property type="term" value="F:4 iron, 4 sulfur cluster binding"/>
    <property type="evidence" value="ECO:0007669"/>
    <property type="project" value="UniProtKB-KW"/>
</dbReference>
<dbReference type="GO" id="GO:0005506">
    <property type="term" value="F:iron ion binding"/>
    <property type="evidence" value="ECO:0007669"/>
    <property type="project" value="UniProtKB-UniRule"/>
</dbReference>
<dbReference type="GO" id="GO:0008137">
    <property type="term" value="F:NADH dehydrogenase (ubiquinone) activity"/>
    <property type="evidence" value="ECO:0007669"/>
    <property type="project" value="InterPro"/>
</dbReference>
<dbReference type="GO" id="GO:0050136">
    <property type="term" value="F:NADH:ubiquinone reductase (non-electrogenic) activity"/>
    <property type="evidence" value="ECO:0007669"/>
    <property type="project" value="UniProtKB-UniRule"/>
</dbReference>
<dbReference type="GO" id="GO:0048038">
    <property type="term" value="F:quinone binding"/>
    <property type="evidence" value="ECO:0007669"/>
    <property type="project" value="UniProtKB-KW"/>
</dbReference>
<dbReference type="GO" id="GO:0009060">
    <property type="term" value="P:aerobic respiration"/>
    <property type="evidence" value="ECO:0007669"/>
    <property type="project" value="TreeGrafter"/>
</dbReference>
<dbReference type="GO" id="GO:0015990">
    <property type="term" value="P:electron transport coupled proton transport"/>
    <property type="evidence" value="ECO:0007669"/>
    <property type="project" value="TreeGrafter"/>
</dbReference>
<dbReference type="FunFam" id="3.40.50.12280:FF:000002">
    <property type="entry name" value="NADH-quinone oxidoreductase subunit B"/>
    <property type="match status" value="1"/>
</dbReference>
<dbReference type="Gene3D" id="3.40.50.12280">
    <property type="match status" value="1"/>
</dbReference>
<dbReference type="HAMAP" id="MF_01356">
    <property type="entry name" value="NDH1_NuoB"/>
    <property type="match status" value="1"/>
</dbReference>
<dbReference type="InterPro" id="IPR006137">
    <property type="entry name" value="NADH_UbQ_OxRdtase-like_20kDa"/>
</dbReference>
<dbReference type="InterPro" id="IPR006138">
    <property type="entry name" value="NADH_UQ_OxRdtase_20Kd_su"/>
</dbReference>
<dbReference type="NCBIfam" id="TIGR01957">
    <property type="entry name" value="nuoB_fam"/>
    <property type="match status" value="1"/>
</dbReference>
<dbReference type="NCBIfam" id="NF005012">
    <property type="entry name" value="PRK06411.1"/>
    <property type="match status" value="1"/>
</dbReference>
<dbReference type="NCBIfam" id="NF011389">
    <property type="entry name" value="PRK14814.1"/>
    <property type="match status" value="1"/>
</dbReference>
<dbReference type="PANTHER" id="PTHR11995">
    <property type="entry name" value="NADH DEHYDROGENASE"/>
    <property type="match status" value="1"/>
</dbReference>
<dbReference type="PANTHER" id="PTHR11995:SF14">
    <property type="entry name" value="NADH DEHYDROGENASE [UBIQUINONE] IRON-SULFUR PROTEIN 7, MITOCHONDRIAL"/>
    <property type="match status" value="1"/>
</dbReference>
<dbReference type="Pfam" id="PF01058">
    <property type="entry name" value="Oxidored_q6"/>
    <property type="match status" value="1"/>
</dbReference>
<dbReference type="SUPFAM" id="SSF56770">
    <property type="entry name" value="HydA/Nqo6-like"/>
    <property type="match status" value="1"/>
</dbReference>
<dbReference type="PROSITE" id="PS01150">
    <property type="entry name" value="COMPLEX1_20K"/>
    <property type="match status" value="1"/>
</dbReference>
<accession>B0SP83</accession>
<keyword id="KW-0004">4Fe-4S</keyword>
<keyword id="KW-0997">Cell inner membrane</keyword>
<keyword id="KW-1003">Cell membrane</keyword>
<keyword id="KW-0408">Iron</keyword>
<keyword id="KW-0411">Iron-sulfur</keyword>
<keyword id="KW-0472">Membrane</keyword>
<keyword id="KW-0479">Metal-binding</keyword>
<keyword id="KW-0520">NAD</keyword>
<keyword id="KW-0874">Quinone</keyword>
<keyword id="KW-1185">Reference proteome</keyword>
<keyword id="KW-1278">Translocase</keyword>
<keyword id="KW-0813">Transport</keyword>
<keyword id="KW-0830">Ubiquinone</keyword>
<organism>
    <name type="scientific">Leptospira biflexa serovar Patoc (strain Patoc 1 / ATCC 23582 / Paris)</name>
    <dbReference type="NCBI Taxonomy" id="456481"/>
    <lineage>
        <taxon>Bacteria</taxon>
        <taxon>Pseudomonadati</taxon>
        <taxon>Spirochaetota</taxon>
        <taxon>Spirochaetia</taxon>
        <taxon>Leptospirales</taxon>
        <taxon>Leptospiraceae</taxon>
        <taxon>Leptospira</taxon>
    </lineage>
</organism>
<comment type="function">
    <text evidence="1">NDH-1 shuttles electrons from NADH, via FMN and iron-sulfur (Fe-S) centers, to quinones in the respiratory chain. The immediate electron acceptor for the enzyme in this species is believed to be ubiquinone. Couples the redox reaction to proton translocation (for every two electrons transferred, four hydrogen ions are translocated across the cytoplasmic membrane), and thus conserves the redox energy in a proton gradient.</text>
</comment>
<comment type="catalytic activity">
    <reaction evidence="1">
        <text>a quinone + NADH + 5 H(+)(in) = a quinol + NAD(+) + 4 H(+)(out)</text>
        <dbReference type="Rhea" id="RHEA:57888"/>
        <dbReference type="ChEBI" id="CHEBI:15378"/>
        <dbReference type="ChEBI" id="CHEBI:24646"/>
        <dbReference type="ChEBI" id="CHEBI:57540"/>
        <dbReference type="ChEBI" id="CHEBI:57945"/>
        <dbReference type="ChEBI" id="CHEBI:132124"/>
    </reaction>
</comment>
<comment type="cofactor">
    <cofactor evidence="1">
        <name>[4Fe-4S] cluster</name>
        <dbReference type="ChEBI" id="CHEBI:49883"/>
    </cofactor>
    <text evidence="1">Binds 1 [4Fe-4S] cluster.</text>
</comment>
<comment type="subunit">
    <text evidence="1">NDH-1 is composed of 14 different subunits. Subunits NuoB, C, D, E, F, and G constitute the peripheral sector of the complex.</text>
</comment>
<comment type="subcellular location">
    <subcellularLocation>
        <location evidence="1">Cell inner membrane</location>
        <topology evidence="1">Peripheral membrane protein</topology>
        <orientation evidence="1">Cytoplasmic side</orientation>
    </subcellularLocation>
</comment>
<comment type="similarity">
    <text evidence="1">Belongs to the complex I 20 kDa subunit family.</text>
</comment>
<gene>
    <name evidence="1" type="primary">nuoB</name>
    <name type="ordered locus">LEPBI_I1297</name>
</gene>
<feature type="chain" id="PRO_0000376260" description="NADH-quinone oxidoreductase subunit B">
    <location>
        <begin position="1"/>
        <end position="186"/>
    </location>
</feature>
<feature type="binding site" evidence="1">
    <location>
        <position position="44"/>
    </location>
    <ligand>
        <name>[4Fe-4S] cluster</name>
        <dbReference type="ChEBI" id="CHEBI:49883"/>
    </ligand>
</feature>
<feature type="binding site" evidence="1">
    <location>
        <position position="45"/>
    </location>
    <ligand>
        <name>[4Fe-4S] cluster</name>
        <dbReference type="ChEBI" id="CHEBI:49883"/>
    </ligand>
</feature>
<feature type="binding site" evidence="1">
    <location>
        <position position="110"/>
    </location>
    <ligand>
        <name>[4Fe-4S] cluster</name>
        <dbReference type="ChEBI" id="CHEBI:49883"/>
    </ligand>
</feature>
<feature type="binding site" evidence="1">
    <location>
        <position position="139"/>
    </location>
    <ligand>
        <name>[4Fe-4S] cluster</name>
        <dbReference type="ChEBI" id="CHEBI:49883"/>
    </ligand>
</feature>
<sequence>MGLTETLSKPGEMFGDMFQVATLDNVVQWGQSFSLWPYPFATACCGIEYMSTACADYDIARFGAERPSFSPRQADMILVLGTITYKMAPVLRQIYDQLAEPKFVISVGACASSGGMFHTYGVLQGVDRILPVDVYVPGCPPRPEAILDALVKLQKKVQSQGLEARRQEVMRKIEEINERNKPLVVA</sequence>
<name>NUOB_LEPBP</name>
<reference key="1">
    <citation type="journal article" date="2008" name="PLoS ONE">
        <title>Genome sequence of the saprophyte Leptospira biflexa provides insights into the evolution of Leptospira and the pathogenesis of leptospirosis.</title>
        <authorList>
            <person name="Picardeau M."/>
            <person name="Bulach D.M."/>
            <person name="Bouchier C."/>
            <person name="Zuerner R.L."/>
            <person name="Zidane N."/>
            <person name="Wilson P.J."/>
            <person name="Creno S."/>
            <person name="Kuczek E.S."/>
            <person name="Bommezzadri S."/>
            <person name="Davis J.C."/>
            <person name="McGrath A."/>
            <person name="Johnson M.J."/>
            <person name="Boursaux-Eude C."/>
            <person name="Seemann T."/>
            <person name="Rouy Z."/>
            <person name="Coppel R.L."/>
            <person name="Rood J.I."/>
            <person name="Lajus A."/>
            <person name="Davies J.K."/>
            <person name="Medigue C."/>
            <person name="Adler B."/>
        </authorList>
    </citation>
    <scope>NUCLEOTIDE SEQUENCE [LARGE SCALE GENOMIC DNA]</scope>
    <source>
        <strain>Patoc 1 / ATCC 23582 / Paris</strain>
    </source>
</reference>
<protein>
    <recommendedName>
        <fullName evidence="1">NADH-quinone oxidoreductase subunit B</fullName>
        <ecNumber evidence="1">7.1.1.-</ecNumber>
    </recommendedName>
    <alternativeName>
        <fullName evidence="1">NADH dehydrogenase I subunit B</fullName>
    </alternativeName>
    <alternativeName>
        <fullName evidence="1">NDH-1 subunit B</fullName>
    </alternativeName>
</protein>